<gene>
    <name evidence="1" type="primary">bioB</name>
    <name type="ordered locus">Patl_2557</name>
</gene>
<organism>
    <name type="scientific">Pseudoalteromonas atlantica (strain T6c / ATCC BAA-1087)</name>
    <dbReference type="NCBI Taxonomy" id="3042615"/>
    <lineage>
        <taxon>Bacteria</taxon>
        <taxon>Pseudomonadati</taxon>
        <taxon>Pseudomonadota</taxon>
        <taxon>Gammaproteobacteria</taxon>
        <taxon>Alteromonadales</taxon>
        <taxon>Alteromonadaceae</taxon>
        <taxon>Paraglaciecola</taxon>
    </lineage>
</organism>
<feature type="chain" id="PRO_0000381551" description="Biotin synthase">
    <location>
        <begin position="1"/>
        <end position="369"/>
    </location>
</feature>
<feature type="domain" description="Radical SAM core" evidence="2">
    <location>
        <begin position="51"/>
        <end position="269"/>
    </location>
</feature>
<feature type="binding site" evidence="1">
    <location>
        <position position="66"/>
    </location>
    <ligand>
        <name>[4Fe-4S] cluster</name>
        <dbReference type="ChEBI" id="CHEBI:49883"/>
        <note>4Fe-4S-S-AdoMet</note>
    </ligand>
</feature>
<feature type="binding site" evidence="1">
    <location>
        <position position="70"/>
    </location>
    <ligand>
        <name>[4Fe-4S] cluster</name>
        <dbReference type="ChEBI" id="CHEBI:49883"/>
        <note>4Fe-4S-S-AdoMet</note>
    </ligand>
</feature>
<feature type="binding site" evidence="1">
    <location>
        <position position="73"/>
    </location>
    <ligand>
        <name>[4Fe-4S] cluster</name>
        <dbReference type="ChEBI" id="CHEBI:49883"/>
        <note>4Fe-4S-S-AdoMet</note>
    </ligand>
</feature>
<feature type="binding site" evidence="1">
    <location>
        <position position="110"/>
    </location>
    <ligand>
        <name>[2Fe-2S] cluster</name>
        <dbReference type="ChEBI" id="CHEBI:190135"/>
    </ligand>
</feature>
<feature type="binding site" evidence="1">
    <location>
        <position position="141"/>
    </location>
    <ligand>
        <name>[2Fe-2S] cluster</name>
        <dbReference type="ChEBI" id="CHEBI:190135"/>
    </ligand>
</feature>
<feature type="binding site" evidence="1">
    <location>
        <position position="201"/>
    </location>
    <ligand>
        <name>[2Fe-2S] cluster</name>
        <dbReference type="ChEBI" id="CHEBI:190135"/>
    </ligand>
</feature>
<feature type="binding site" evidence="1">
    <location>
        <position position="273"/>
    </location>
    <ligand>
        <name>[2Fe-2S] cluster</name>
        <dbReference type="ChEBI" id="CHEBI:190135"/>
    </ligand>
</feature>
<protein>
    <recommendedName>
        <fullName evidence="1">Biotin synthase</fullName>
        <ecNumber evidence="1">2.8.1.6</ecNumber>
    </recommendedName>
</protein>
<comment type="function">
    <text evidence="1">Catalyzes the conversion of dethiobiotin (DTB) to biotin by the insertion of a sulfur atom into dethiobiotin via a radical-based mechanism.</text>
</comment>
<comment type="catalytic activity">
    <reaction evidence="1">
        <text>(4R,5S)-dethiobiotin + (sulfur carrier)-SH + 2 reduced [2Fe-2S]-[ferredoxin] + 2 S-adenosyl-L-methionine = (sulfur carrier)-H + biotin + 2 5'-deoxyadenosine + 2 L-methionine + 2 oxidized [2Fe-2S]-[ferredoxin]</text>
        <dbReference type="Rhea" id="RHEA:22060"/>
        <dbReference type="Rhea" id="RHEA-COMP:10000"/>
        <dbReference type="Rhea" id="RHEA-COMP:10001"/>
        <dbReference type="Rhea" id="RHEA-COMP:14737"/>
        <dbReference type="Rhea" id="RHEA-COMP:14739"/>
        <dbReference type="ChEBI" id="CHEBI:17319"/>
        <dbReference type="ChEBI" id="CHEBI:29917"/>
        <dbReference type="ChEBI" id="CHEBI:33737"/>
        <dbReference type="ChEBI" id="CHEBI:33738"/>
        <dbReference type="ChEBI" id="CHEBI:57586"/>
        <dbReference type="ChEBI" id="CHEBI:57844"/>
        <dbReference type="ChEBI" id="CHEBI:59789"/>
        <dbReference type="ChEBI" id="CHEBI:64428"/>
        <dbReference type="ChEBI" id="CHEBI:149473"/>
        <dbReference type="EC" id="2.8.1.6"/>
    </reaction>
</comment>
<comment type="cofactor">
    <cofactor evidence="1">
        <name>[4Fe-4S] cluster</name>
        <dbReference type="ChEBI" id="CHEBI:49883"/>
    </cofactor>
    <text evidence="1">Binds 1 [4Fe-4S] cluster. The cluster is coordinated with 3 cysteines and an exchangeable S-adenosyl-L-methionine.</text>
</comment>
<comment type="cofactor">
    <cofactor evidence="1">
        <name>[2Fe-2S] cluster</name>
        <dbReference type="ChEBI" id="CHEBI:190135"/>
    </cofactor>
    <text evidence="1">Binds 1 [2Fe-2S] cluster. The cluster is coordinated with 3 cysteines and 1 arginine.</text>
</comment>
<comment type="pathway">
    <text evidence="1">Cofactor biosynthesis; biotin biosynthesis; biotin from 7,8-diaminononanoate: step 2/2.</text>
</comment>
<comment type="subunit">
    <text evidence="1">Homodimer.</text>
</comment>
<comment type="similarity">
    <text evidence="1">Belongs to the radical SAM superfamily. Biotin synthase family.</text>
</comment>
<dbReference type="EC" id="2.8.1.6" evidence="1"/>
<dbReference type="EMBL" id="CP000388">
    <property type="protein sequence ID" value="ABG41073.1"/>
    <property type="molecule type" value="Genomic_DNA"/>
</dbReference>
<dbReference type="RefSeq" id="WP_011575339.1">
    <property type="nucleotide sequence ID" value="NC_008228.1"/>
</dbReference>
<dbReference type="SMR" id="Q15SR5"/>
<dbReference type="STRING" id="342610.Patl_2557"/>
<dbReference type="KEGG" id="pat:Patl_2557"/>
<dbReference type="eggNOG" id="COG0502">
    <property type="taxonomic scope" value="Bacteria"/>
</dbReference>
<dbReference type="HOGENOM" id="CLU_033172_1_2_6"/>
<dbReference type="OrthoDB" id="9786826at2"/>
<dbReference type="UniPathway" id="UPA00078">
    <property type="reaction ID" value="UER00162"/>
</dbReference>
<dbReference type="Proteomes" id="UP000001981">
    <property type="component" value="Chromosome"/>
</dbReference>
<dbReference type="GO" id="GO:0051537">
    <property type="term" value="F:2 iron, 2 sulfur cluster binding"/>
    <property type="evidence" value="ECO:0007669"/>
    <property type="project" value="UniProtKB-KW"/>
</dbReference>
<dbReference type="GO" id="GO:0051539">
    <property type="term" value="F:4 iron, 4 sulfur cluster binding"/>
    <property type="evidence" value="ECO:0007669"/>
    <property type="project" value="UniProtKB-KW"/>
</dbReference>
<dbReference type="GO" id="GO:0004076">
    <property type="term" value="F:biotin synthase activity"/>
    <property type="evidence" value="ECO:0007669"/>
    <property type="project" value="UniProtKB-UniRule"/>
</dbReference>
<dbReference type="GO" id="GO:0005506">
    <property type="term" value="F:iron ion binding"/>
    <property type="evidence" value="ECO:0007669"/>
    <property type="project" value="UniProtKB-UniRule"/>
</dbReference>
<dbReference type="GO" id="GO:0009102">
    <property type="term" value="P:biotin biosynthetic process"/>
    <property type="evidence" value="ECO:0007669"/>
    <property type="project" value="UniProtKB-UniRule"/>
</dbReference>
<dbReference type="CDD" id="cd01335">
    <property type="entry name" value="Radical_SAM"/>
    <property type="match status" value="1"/>
</dbReference>
<dbReference type="FunFam" id="3.20.20.70:FF:000011">
    <property type="entry name" value="Biotin synthase"/>
    <property type="match status" value="1"/>
</dbReference>
<dbReference type="Gene3D" id="3.20.20.70">
    <property type="entry name" value="Aldolase class I"/>
    <property type="match status" value="1"/>
</dbReference>
<dbReference type="HAMAP" id="MF_01694">
    <property type="entry name" value="BioB"/>
    <property type="match status" value="1"/>
</dbReference>
<dbReference type="InterPro" id="IPR013785">
    <property type="entry name" value="Aldolase_TIM"/>
</dbReference>
<dbReference type="InterPro" id="IPR010722">
    <property type="entry name" value="BATS_dom"/>
</dbReference>
<dbReference type="InterPro" id="IPR002684">
    <property type="entry name" value="Biotin_synth/BioAB"/>
</dbReference>
<dbReference type="InterPro" id="IPR024177">
    <property type="entry name" value="Biotin_synthase"/>
</dbReference>
<dbReference type="InterPro" id="IPR006638">
    <property type="entry name" value="Elp3/MiaA/NifB-like_rSAM"/>
</dbReference>
<dbReference type="InterPro" id="IPR007197">
    <property type="entry name" value="rSAM"/>
</dbReference>
<dbReference type="NCBIfam" id="TIGR00433">
    <property type="entry name" value="bioB"/>
    <property type="match status" value="1"/>
</dbReference>
<dbReference type="PANTHER" id="PTHR22976">
    <property type="entry name" value="BIOTIN SYNTHASE"/>
    <property type="match status" value="1"/>
</dbReference>
<dbReference type="PANTHER" id="PTHR22976:SF2">
    <property type="entry name" value="BIOTIN SYNTHASE, MITOCHONDRIAL"/>
    <property type="match status" value="1"/>
</dbReference>
<dbReference type="Pfam" id="PF06968">
    <property type="entry name" value="BATS"/>
    <property type="match status" value="1"/>
</dbReference>
<dbReference type="Pfam" id="PF04055">
    <property type="entry name" value="Radical_SAM"/>
    <property type="match status" value="1"/>
</dbReference>
<dbReference type="PIRSF" id="PIRSF001619">
    <property type="entry name" value="Biotin_synth"/>
    <property type="match status" value="1"/>
</dbReference>
<dbReference type="SFLD" id="SFLDF00272">
    <property type="entry name" value="biotin_synthase"/>
    <property type="match status" value="1"/>
</dbReference>
<dbReference type="SFLD" id="SFLDG01278">
    <property type="entry name" value="biotin_synthase_like"/>
    <property type="match status" value="1"/>
</dbReference>
<dbReference type="SMART" id="SM00876">
    <property type="entry name" value="BATS"/>
    <property type="match status" value="1"/>
</dbReference>
<dbReference type="SMART" id="SM00729">
    <property type="entry name" value="Elp3"/>
    <property type="match status" value="1"/>
</dbReference>
<dbReference type="SUPFAM" id="SSF102114">
    <property type="entry name" value="Radical SAM enzymes"/>
    <property type="match status" value="1"/>
</dbReference>
<dbReference type="PROSITE" id="PS51918">
    <property type="entry name" value="RADICAL_SAM"/>
    <property type="match status" value="1"/>
</dbReference>
<proteinExistence type="inferred from homology"/>
<accession>Q15SR5</accession>
<sequence length="369" mass="41341">MSVNVDATSSSGASEVRHDWTLAEVNALFAMPFNDLLFKAQCVHRAHFDPNYVQVSTLLSIKTGACPEDCKYCPQSARYDTGLEKERLMEIEKVIQRAREAKAAGSTRFCMGAAWRNPKERDMPYVTDMVREVKKLGLETCMTLGMLTREQAIALQQAGLDYYNHNLDTSPEFYGDIITTRTYQDRLNTLDAVREAGMNVCSGGIVGMGETGSDRSGLLMQLANLEHQPESVPINMLVKVKGTPMENVEDLDYFEFIRTIAVARIMMPKSFVRLSAGREAMNEQMQAMCFMAGANSIFYGCKLLTTSNPETHEDVMLFKKLGINAKQTREYSDEAHQAALLDEIQTNEAPQAPEMFYDATQKKPETVNI</sequence>
<keyword id="KW-0001">2Fe-2S</keyword>
<keyword id="KW-0004">4Fe-4S</keyword>
<keyword id="KW-0093">Biotin biosynthesis</keyword>
<keyword id="KW-0408">Iron</keyword>
<keyword id="KW-0411">Iron-sulfur</keyword>
<keyword id="KW-0479">Metal-binding</keyword>
<keyword id="KW-0949">S-adenosyl-L-methionine</keyword>
<keyword id="KW-0808">Transferase</keyword>
<reference key="1">
    <citation type="submission" date="2006-06" db="EMBL/GenBank/DDBJ databases">
        <title>Complete sequence of Pseudoalteromonas atlantica T6c.</title>
        <authorList>
            <consortium name="US DOE Joint Genome Institute"/>
            <person name="Copeland A."/>
            <person name="Lucas S."/>
            <person name="Lapidus A."/>
            <person name="Barry K."/>
            <person name="Detter J.C."/>
            <person name="Glavina del Rio T."/>
            <person name="Hammon N."/>
            <person name="Israni S."/>
            <person name="Dalin E."/>
            <person name="Tice H."/>
            <person name="Pitluck S."/>
            <person name="Saunders E."/>
            <person name="Brettin T."/>
            <person name="Bruce D."/>
            <person name="Han C."/>
            <person name="Tapia R."/>
            <person name="Gilna P."/>
            <person name="Schmutz J."/>
            <person name="Larimer F."/>
            <person name="Land M."/>
            <person name="Hauser L."/>
            <person name="Kyrpides N."/>
            <person name="Kim E."/>
            <person name="Karls A.C."/>
            <person name="Bartlett D."/>
            <person name="Higgins B.P."/>
            <person name="Richardson P."/>
        </authorList>
    </citation>
    <scope>NUCLEOTIDE SEQUENCE [LARGE SCALE GENOMIC DNA]</scope>
    <source>
        <strain>T6c / ATCC BAA-1087</strain>
    </source>
</reference>
<name>BIOB_PSEA6</name>
<evidence type="ECO:0000255" key="1">
    <source>
        <dbReference type="HAMAP-Rule" id="MF_01694"/>
    </source>
</evidence>
<evidence type="ECO:0000255" key="2">
    <source>
        <dbReference type="PROSITE-ProRule" id="PRU01266"/>
    </source>
</evidence>